<name>ECM27_YEAST</name>
<evidence type="ECO:0000255" key="1"/>
<evidence type="ECO:0000305" key="2"/>
<comment type="subcellular location">
    <subcellularLocation>
        <location evidence="2">Membrane</location>
        <topology evidence="2">Multi-pass membrane protein</topology>
    </subcellularLocation>
</comment>
<comment type="similarity">
    <text evidence="2">Belongs to the Ca(2+):cation antiporter (CaCA) (TC 2.A.19) family.</text>
</comment>
<sequence>MDWAINVAHPRLLYKDPKLSVTFIVPSLFHIIIAFVLLGICASDFLCPNVAHISDPNSLRSNGSLVSKTASHASHTGALMAVLLSWCNSSPDLFSNLMSWATSTRETRSTSVSLSIGEVLGACGIILCIVEGSIFIIMSRTHIEISQIQKLSIMRDLLFSLAAMCVMSYVSLMNQVTVLNCLLMAFLYAFYLVVKLTFKLNHSAETPDETAADTSLRENSVSPFLDDSLMASGLLPPIQPGFDISNSITHGIKPSLLSAMDFNSFLSMLENSSLEEDDSRNEMAELNTLRSMTPGQHWSASATVAGEATSAGRPFSEPTNAFTEYRDSERAINSSPAVFAPYRDNPDDEESQEQVLLETTTHGHFGAQEMRRFSKRSLGWIIKIFIPHLSNFSQKSISDAIFSIITVPFFIIFKLSCPQPPSDILSYDPTLNRYSLTTLPIILLFIQSITAPFLLCSILSVLLTYHLGYLVYLFPLILAMALILLLTAFITKVNLHNKFTLSLDSSNILQEKLQKRKLLERLNTSIQIIFLAIGIINIIIWISLLANSLIEMMEIYQKILGLSKAILGLTIFAWGNSVGDLISNISMCRLYKTQTHYQDRVRLATKFFMISCASCLGGVMLNSMGGIGFSGLVSMLFIGAFNDNEWWFLRKVKLQETSQLDNTLNYKFIVSCVFIILQIILLLLFFGGPNNIKRRLTKEMKLVGISMCGLWALATLINILLELFS</sequence>
<accession>P47144</accession>
<accession>D6VWS5</accession>
<protein>
    <recommendedName>
        <fullName>Protein ECM27</fullName>
    </recommendedName>
    <alternativeName>
        <fullName>Extracellular matrix protein 27</fullName>
    </alternativeName>
</protein>
<reference key="1">
    <citation type="journal article" date="1996" name="EMBO J.">
        <title>Complete nucleotide sequence of Saccharomyces cerevisiae chromosome X.</title>
        <authorList>
            <person name="Galibert F."/>
            <person name="Alexandraki D."/>
            <person name="Baur A."/>
            <person name="Boles E."/>
            <person name="Chalwatzis N."/>
            <person name="Chuat J.-C."/>
            <person name="Coster F."/>
            <person name="Cziepluch C."/>
            <person name="de Haan M."/>
            <person name="Domdey H."/>
            <person name="Durand P."/>
            <person name="Entian K.-D."/>
            <person name="Gatius M."/>
            <person name="Goffeau A."/>
            <person name="Grivell L.A."/>
            <person name="Hennemann A."/>
            <person name="Herbert C.J."/>
            <person name="Heumann K."/>
            <person name="Hilger F."/>
            <person name="Hollenberg C.P."/>
            <person name="Huang M.-E."/>
            <person name="Jacq C."/>
            <person name="Jauniaux J.-C."/>
            <person name="Katsoulou C."/>
            <person name="Kirchrath L."/>
            <person name="Kleine K."/>
            <person name="Kordes E."/>
            <person name="Koetter P."/>
            <person name="Liebl S."/>
            <person name="Louis E.J."/>
            <person name="Manus V."/>
            <person name="Mewes H.-W."/>
            <person name="Miosga T."/>
            <person name="Obermaier B."/>
            <person name="Perea J."/>
            <person name="Pohl T.M."/>
            <person name="Portetelle D."/>
            <person name="Pujol A."/>
            <person name="Purnelle B."/>
            <person name="Ramezani Rad M."/>
            <person name="Rasmussen S.W."/>
            <person name="Rose M."/>
            <person name="Rossau R."/>
            <person name="Schaaff-Gerstenschlaeger I."/>
            <person name="Smits P.H.M."/>
            <person name="Scarcez T."/>
            <person name="Soriano N."/>
            <person name="To Van D."/>
            <person name="Tzermia M."/>
            <person name="Van Broekhoven A."/>
            <person name="Vandenbol M."/>
            <person name="Wedler H."/>
            <person name="von Wettstein D."/>
            <person name="Wambutt R."/>
            <person name="Zagulski M."/>
            <person name="Zollner A."/>
            <person name="Karpfinger-Hartl L."/>
        </authorList>
    </citation>
    <scope>NUCLEOTIDE SEQUENCE [LARGE SCALE GENOMIC DNA]</scope>
    <source>
        <strain>ATCC 204508 / S288c</strain>
    </source>
</reference>
<reference key="2">
    <citation type="journal article" date="2014" name="G3 (Bethesda)">
        <title>The reference genome sequence of Saccharomyces cerevisiae: Then and now.</title>
        <authorList>
            <person name="Engel S.R."/>
            <person name="Dietrich F.S."/>
            <person name="Fisk D.G."/>
            <person name="Binkley G."/>
            <person name="Balakrishnan R."/>
            <person name="Costanzo M.C."/>
            <person name="Dwight S.S."/>
            <person name="Hitz B.C."/>
            <person name="Karra K."/>
            <person name="Nash R.S."/>
            <person name="Weng S."/>
            <person name="Wong E.D."/>
            <person name="Lloyd P."/>
            <person name="Skrzypek M.S."/>
            <person name="Miyasato S.R."/>
            <person name="Simison M."/>
            <person name="Cherry J.M."/>
        </authorList>
    </citation>
    <scope>GENOME REANNOTATION</scope>
    <scope>SEQUENCE REVISION TO 219</scope>
    <source>
        <strain>ATCC 204508 / S288c</strain>
    </source>
</reference>
<reference key="3">
    <citation type="journal article" date="1997" name="Genetics">
        <title>Large scale identification of genes involved in cell surface biosynthesis and architecture in Saccharomyces cerevisiae.</title>
        <authorList>
            <person name="Lussier M."/>
            <person name="White A.-M."/>
            <person name="Sheraton J."/>
            <person name="di Paolo T."/>
            <person name="Treadwell J."/>
            <person name="Southard S.B."/>
            <person name="Horenstein C.I."/>
            <person name="Chen-Weiner J."/>
            <person name="Ram A.F.J."/>
            <person name="Kapteyn J.C."/>
            <person name="Roemer T.W."/>
            <person name="Vo D.H."/>
            <person name="Bondoc D.C."/>
            <person name="Hall J."/>
            <person name="Zhong W.-W."/>
            <person name="Sdicu A.-M."/>
            <person name="Davies J."/>
            <person name="Klis F.M."/>
            <person name="Robbins P.W."/>
            <person name="Bussey H."/>
        </authorList>
    </citation>
    <scope>IDENTIFICATION</scope>
</reference>
<reference key="4">
    <citation type="journal article" date="2008" name="Mol. Cell. Proteomics">
        <title>A multidimensional chromatography technology for in-depth phosphoproteome analysis.</title>
        <authorList>
            <person name="Albuquerque C.P."/>
            <person name="Smolka M.B."/>
            <person name="Payne S.H."/>
            <person name="Bafna V."/>
            <person name="Eng J."/>
            <person name="Zhou H."/>
        </authorList>
    </citation>
    <scope>IDENTIFICATION BY MASS SPECTROMETRY [LARGE SCALE ANALYSIS]</scope>
</reference>
<gene>
    <name type="primary">ECM27</name>
    <name type="ordered locus">YJR106W</name>
    <name type="ORF">J1978</name>
</gene>
<proteinExistence type="evidence at protein level"/>
<dbReference type="EMBL" id="Z49606">
    <property type="protein sequence ID" value="CAA89636.1"/>
    <property type="molecule type" value="Genomic_DNA"/>
</dbReference>
<dbReference type="EMBL" id="BK006943">
    <property type="protein sequence ID" value="DAA08891.2"/>
    <property type="molecule type" value="Genomic_DNA"/>
</dbReference>
<dbReference type="PIR" id="S57127">
    <property type="entry name" value="S57127"/>
</dbReference>
<dbReference type="RefSeq" id="NP_012640.4">
    <property type="nucleotide sequence ID" value="NM_001181764.4"/>
</dbReference>
<dbReference type="BioGRID" id="33862">
    <property type="interactions" value="46"/>
</dbReference>
<dbReference type="DIP" id="DIP-7290N"/>
<dbReference type="FunCoup" id="P47144">
    <property type="interactions" value="31"/>
</dbReference>
<dbReference type="IntAct" id="P47144">
    <property type="interactions" value="2"/>
</dbReference>
<dbReference type="MINT" id="P47144"/>
<dbReference type="STRING" id="4932.YJR106W"/>
<dbReference type="iPTMnet" id="P47144"/>
<dbReference type="PaxDb" id="4932-YJR106W"/>
<dbReference type="PeptideAtlas" id="P47144"/>
<dbReference type="EnsemblFungi" id="YJR106W_mRNA">
    <property type="protein sequence ID" value="YJR106W"/>
    <property type="gene ID" value="YJR106W"/>
</dbReference>
<dbReference type="GeneID" id="853570"/>
<dbReference type="KEGG" id="sce:YJR106W"/>
<dbReference type="AGR" id="SGD:S000003867"/>
<dbReference type="SGD" id="S000003867">
    <property type="gene designation" value="ECM27"/>
</dbReference>
<dbReference type="VEuPathDB" id="FungiDB:YJR106W"/>
<dbReference type="eggNOG" id="KOG2399">
    <property type="taxonomic scope" value="Eukaryota"/>
</dbReference>
<dbReference type="GeneTree" id="ENSGT00940000157433"/>
<dbReference type="HOGENOM" id="CLU_004979_2_1_1"/>
<dbReference type="InParanoid" id="P47144"/>
<dbReference type="OMA" id="CASDYLC"/>
<dbReference type="OrthoDB" id="407410at2759"/>
<dbReference type="BioCyc" id="YEAST:G3O-31731-MONOMER"/>
<dbReference type="Reactome" id="R-SCE-425561">
    <property type="pathway name" value="Sodium/Calcium exchangers"/>
</dbReference>
<dbReference type="Reactome" id="R-SCE-8949215">
    <property type="pathway name" value="Mitochondrial calcium ion transport"/>
</dbReference>
<dbReference type="BioGRID-ORCS" id="853570">
    <property type="hits" value="1 hit in 10 CRISPR screens"/>
</dbReference>
<dbReference type="PRO" id="PR:P47144"/>
<dbReference type="Proteomes" id="UP000002311">
    <property type="component" value="Chromosome X"/>
</dbReference>
<dbReference type="RNAct" id="P47144">
    <property type="molecule type" value="protein"/>
</dbReference>
<dbReference type="GO" id="GO:0005783">
    <property type="term" value="C:endoplasmic reticulum"/>
    <property type="evidence" value="ECO:0007005"/>
    <property type="project" value="SGD"/>
</dbReference>
<dbReference type="GO" id="GO:0016020">
    <property type="term" value="C:membrane"/>
    <property type="evidence" value="ECO:0000318"/>
    <property type="project" value="GO_Central"/>
</dbReference>
<dbReference type="GO" id="GO:0008324">
    <property type="term" value="F:monoatomic cation transmembrane transporter activity"/>
    <property type="evidence" value="ECO:0000318"/>
    <property type="project" value="GO_Central"/>
</dbReference>
<dbReference type="GO" id="GO:0006874">
    <property type="term" value="P:intracellular calcium ion homeostasis"/>
    <property type="evidence" value="ECO:0000315"/>
    <property type="project" value="SGD"/>
</dbReference>
<dbReference type="GO" id="GO:0006812">
    <property type="term" value="P:monoatomic cation transport"/>
    <property type="evidence" value="ECO:0000318"/>
    <property type="project" value="GO_Central"/>
</dbReference>
<dbReference type="GO" id="GO:0070316">
    <property type="term" value="P:regulation of G0 to G1 transition"/>
    <property type="evidence" value="ECO:0000315"/>
    <property type="project" value="SGD"/>
</dbReference>
<dbReference type="FunFam" id="1.20.1420.30:FF:000043">
    <property type="entry name" value="Ecm27p"/>
    <property type="match status" value="1"/>
</dbReference>
<dbReference type="Gene3D" id="1.20.1420.30">
    <property type="entry name" value="NCX, central ion-binding region"/>
    <property type="match status" value="2"/>
</dbReference>
<dbReference type="InterPro" id="IPR051359">
    <property type="entry name" value="CaCA_antiporter"/>
</dbReference>
<dbReference type="InterPro" id="IPR004837">
    <property type="entry name" value="NaCa_Exmemb"/>
</dbReference>
<dbReference type="InterPro" id="IPR044880">
    <property type="entry name" value="NCX_ion-bd_dom_sf"/>
</dbReference>
<dbReference type="PANTHER" id="PTHR12266:SF0">
    <property type="entry name" value="MITOCHONDRIAL SODIUM_CALCIUM EXCHANGER PROTEIN"/>
    <property type="match status" value="1"/>
</dbReference>
<dbReference type="PANTHER" id="PTHR12266">
    <property type="entry name" value="NA+/CA2+ K+ INDEPENDENT EXCHANGER"/>
    <property type="match status" value="1"/>
</dbReference>
<dbReference type="Pfam" id="PF01699">
    <property type="entry name" value="Na_Ca_ex"/>
    <property type="match status" value="2"/>
</dbReference>
<feature type="chain" id="PRO_0000209503" description="Protein ECM27">
    <location>
        <begin position="1"/>
        <end position="725"/>
    </location>
</feature>
<feature type="transmembrane region" description="Helical" evidence="1">
    <location>
        <begin position="21"/>
        <end position="41"/>
    </location>
</feature>
<feature type="transmembrane region" description="Helical" evidence="1">
    <location>
        <begin position="119"/>
        <end position="139"/>
    </location>
</feature>
<feature type="transmembrane region" description="Helical" evidence="1">
    <location>
        <begin position="157"/>
        <end position="177"/>
    </location>
</feature>
<feature type="transmembrane region" description="Helical" evidence="1">
    <location>
        <begin position="178"/>
        <end position="198"/>
    </location>
</feature>
<feature type="transmembrane region" description="Helical" evidence="1">
    <location>
        <begin position="397"/>
        <end position="417"/>
    </location>
</feature>
<feature type="transmembrane region" description="Helical" evidence="1">
    <location>
        <begin position="439"/>
        <end position="459"/>
    </location>
</feature>
<feature type="transmembrane region" description="Helical" evidence="1">
    <location>
        <begin position="470"/>
        <end position="490"/>
    </location>
</feature>
<feature type="transmembrane region" description="Helical" evidence="1">
    <location>
        <begin position="526"/>
        <end position="546"/>
    </location>
</feature>
<feature type="transmembrane region" description="Helical" evidence="1">
    <location>
        <begin position="559"/>
        <end position="579"/>
    </location>
</feature>
<feature type="transmembrane region" description="Helical" evidence="1">
    <location>
        <begin position="621"/>
        <end position="641"/>
    </location>
</feature>
<feature type="transmembrane region" description="Helical" evidence="1">
    <location>
        <begin position="668"/>
        <end position="688"/>
    </location>
</feature>
<feature type="transmembrane region" description="Helical" evidence="1">
    <location>
        <begin position="704"/>
        <end position="724"/>
    </location>
</feature>
<feature type="sequence conflict" description="In Ref. 1; CAA89636." evidence="2" ref="1">
    <original>N</original>
    <variation>D</variation>
    <location>
        <position position="219"/>
    </location>
</feature>
<organism>
    <name type="scientific">Saccharomyces cerevisiae (strain ATCC 204508 / S288c)</name>
    <name type="common">Baker's yeast</name>
    <dbReference type="NCBI Taxonomy" id="559292"/>
    <lineage>
        <taxon>Eukaryota</taxon>
        <taxon>Fungi</taxon>
        <taxon>Dikarya</taxon>
        <taxon>Ascomycota</taxon>
        <taxon>Saccharomycotina</taxon>
        <taxon>Saccharomycetes</taxon>
        <taxon>Saccharomycetales</taxon>
        <taxon>Saccharomycetaceae</taxon>
        <taxon>Saccharomyces</taxon>
    </lineage>
</organism>
<keyword id="KW-0472">Membrane</keyword>
<keyword id="KW-1185">Reference proteome</keyword>
<keyword id="KW-0812">Transmembrane</keyword>
<keyword id="KW-1133">Transmembrane helix</keyword>
<keyword id="KW-0813">Transport</keyword>